<dbReference type="EC" id="1.14.11.-" evidence="1"/>
<dbReference type="EMBL" id="CP000158">
    <property type="protein sequence ID" value="ABI76006.1"/>
    <property type="molecule type" value="Genomic_DNA"/>
</dbReference>
<dbReference type="RefSeq" id="WP_011646633.1">
    <property type="nucleotide sequence ID" value="NC_008358.1"/>
</dbReference>
<dbReference type="SMR" id="Q0C1R0"/>
<dbReference type="STRING" id="228405.HNE_1625"/>
<dbReference type="KEGG" id="hne:HNE_1625"/>
<dbReference type="eggNOG" id="COG3128">
    <property type="taxonomic scope" value="Bacteria"/>
</dbReference>
<dbReference type="HOGENOM" id="CLU_106663_0_0_5"/>
<dbReference type="Proteomes" id="UP000001959">
    <property type="component" value="Chromosome"/>
</dbReference>
<dbReference type="GO" id="GO:0016706">
    <property type="term" value="F:2-oxoglutarate-dependent dioxygenase activity"/>
    <property type="evidence" value="ECO:0007669"/>
    <property type="project" value="UniProtKB-UniRule"/>
</dbReference>
<dbReference type="GO" id="GO:0005506">
    <property type="term" value="F:iron ion binding"/>
    <property type="evidence" value="ECO:0007669"/>
    <property type="project" value="UniProtKB-UniRule"/>
</dbReference>
<dbReference type="GO" id="GO:0031418">
    <property type="term" value="F:L-ascorbic acid binding"/>
    <property type="evidence" value="ECO:0007669"/>
    <property type="project" value="UniProtKB-KW"/>
</dbReference>
<dbReference type="GO" id="GO:0006974">
    <property type="term" value="P:DNA damage response"/>
    <property type="evidence" value="ECO:0007669"/>
    <property type="project" value="TreeGrafter"/>
</dbReference>
<dbReference type="GO" id="GO:0006879">
    <property type="term" value="P:intracellular iron ion homeostasis"/>
    <property type="evidence" value="ECO:0007669"/>
    <property type="project" value="TreeGrafter"/>
</dbReference>
<dbReference type="Gene3D" id="2.60.120.620">
    <property type="entry name" value="q2cbj1_9rhob like domain"/>
    <property type="match status" value="1"/>
</dbReference>
<dbReference type="Gene3D" id="4.10.860.20">
    <property type="entry name" value="Rabenosyn, Rab binding domain"/>
    <property type="match status" value="1"/>
</dbReference>
<dbReference type="HAMAP" id="MF_00657">
    <property type="entry name" value="Hydroxyl_YbiX"/>
    <property type="match status" value="1"/>
</dbReference>
<dbReference type="InterPro" id="IPR005123">
    <property type="entry name" value="Oxoglu/Fe-dep_dioxygenase_dom"/>
</dbReference>
<dbReference type="InterPro" id="IPR023550">
    <property type="entry name" value="PKHD_hydroxylase"/>
</dbReference>
<dbReference type="InterPro" id="IPR006620">
    <property type="entry name" value="Pro_4_hyd_alph"/>
</dbReference>
<dbReference type="InterPro" id="IPR044862">
    <property type="entry name" value="Pro_4_hyd_alph_FE2OG_OXY"/>
</dbReference>
<dbReference type="NCBIfam" id="NF003974">
    <property type="entry name" value="PRK05467.1-3"/>
    <property type="match status" value="1"/>
</dbReference>
<dbReference type="NCBIfam" id="NF003975">
    <property type="entry name" value="PRK05467.1-4"/>
    <property type="match status" value="1"/>
</dbReference>
<dbReference type="PANTHER" id="PTHR41536">
    <property type="entry name" value="PKHD-TYPE HYDROXYLASE YBIX"/>
    <property type="match status" value="1"/>
</dbReference>
<dbReference type="PANTHER" id="PTHR41536:SF1">
    <property type="entry name" value="PKHD-TYPE HYDROXYLASE YBIX"/>
    <property type="match status" value="1"/>
</dbReference>
<dbReference type="Pfam" id="PF13640">
    <property type="entry name" value="2OG-FeII_Oxy_3"/>
    <property type="match status" value="1"/>
</dbReference>
<dbReference type="SMART" id="SM00702">
    <property type="entry name" value="P4Hc"/>
    <property type="match status" value="1"/>
</dbReference>
<dbReference type="SUPFAM" id="SSF51197">
    <property type="entry name" value="Clavaminate synthase-like"/>
    <property type="match status" value="1"/>
</dbReference>
<dbReference type="PROSITE" id="PS51471">
    <property type="entry name" value="FE2OG_OXY"/>
    <property type="match status" value="1"/>
</dbReference>
<comment type="cofactor">
    <cofactor evidence="1">
        <name>Fe(2+)</name>
        <dbReference type="ChEBI" id="CHEBI:29033"/>
    </cofactor>
    <text evidence="1">Binds 1 Fe(2+) ion per subunit.</text>
</comment>
<comment type="cofactor">
    <cofactor evidence="1">
        <name>L-ascorbate</name>
        <dbReference type="ChEBI" id="CHEBI:38290"/>
    </cofactor>
</comment>
<reference key="1">
    <citation type="journal article" date="2006" name="J. Bacteriol.">
        <title>Comparative genomic evidence for a close relationship between the dimorphic prosthecate bacteria Hyphomonas neptunium and Caulobacter crescentus.</title>
        <authorList>
            <person name="Badger J.H."/>
            <person name="Hoover T.R."/>
            <person name="Brun Y.V."/>
            <person name="Weiner R.M."/>
            <person name="Laub M.T."/>
            <person name="Alexandre G."/>
            <person name="Mrazek J."/>
            <person name="Ren Q."/>
            <person name="Paulsen I.T."/>
            <person name="Nelson K.E."/>
            <person name="Khouri H.M."/>
            <person name="Radune D."/>
            <person name="Sosa J."/>
            <person name="Dodson R.J."/>
            <person name="Sullivan S.A."/>
            <person name="Rosovitz M.J."/>
            <person name="Madupu R."/>
            <person name="Brinkac L.M."/>
            <person name="Durkin A.S."/>
            <person name="Daugherty S.C."/>
            <person name="Kothari S.P."/>
            <person name="Giglio M.G."/>
            <person name="Zhou L."/>
            <person name="Haft D.H."/>
            <person name="Selengut J.D."/>
            <person name="Davidsen T.M."/>
            <person name="Yang Q."/>
            <person name="Zafar N."/>
            <person name="Ward N.L."/>
        </authorList>
    </citation>
    <scope>NUCLEOTIDE SEQUENCE [LARGE SCALE GENOMIC DNA]</scope>
    <source>
        <strain>ATCC 15444</strain>
    </source>
</reference>
<organism>
    <name type="scientific">Hyphomonas neptunium (strain ATCC 15444)</name>
    <dbReference type="NCBI Taxonomy" id="228405"/>
    <lineage>
        <taxon>Bacteria</taxon>
        <taxon>Pseudomonadati</taxon>
        <taxon>Pseudomonadota</taxon>
        <taxon>Alphaproteobacteria</taxon>
        <taxon>Hyphomonadales</taxon>
        <taxon>Hyphomonadaceae</taxon>
        <taxon>Hyphomonas</taxon>
    </lineage>
</organism>
<proteinExistence type="inferred from homology"/>
<sequence length="224" mass="24660">MIVIENILGQDVLTEVAAALRELRWEDGRNTAGATARRVKRNQQADLSSRTGSKVREVLLEAVKRHPVVEAYARPLKFAPPLISCSGEGDAYGLHIDNPVMGKGDARLRTDLSFTLFLSPPESYDGGELEIETVFKTESVKLPAGSMVIYPSTELHRVTPVTSGERFVFVGWIQSAIKDAAQRAILFDVTNLKAGLARRFPPGSPELLTLAKTESNLIRMWSDI</sequence>
<name>Y1625_HYPNA</name>
<evidence type="ECO:0000255" key="1">
    <source>
        <dbReference type="HAMAP-Rule" id="MF_00657"/>
    </source>
</evidence>
<keyword id="KW-0223">Dioxygenase</keyword>
<keyword id="KW-0408">Iron</keyword>
<keyword id="KW-0479">Metal-binding</keyword>
<keyword id="KW-0560">Oxidoreductase</keyword>
<keyword id="KW-1185">Reference proteome</keyword>
<keyword id="KW-0847">Vitamin C</keyword>
<gene>
    <name type="ordered locus">HNE_1625</name>
</gene>
<feature type="chain" id="PRO_0000346484" description="PKHD-type hydroxylase HNE_1625">
    <location>
        <begin position="1"/>
        <end position="224"/>
    </location>
</feature>
<feature type="domain" description="Fe2OG dioxygenase" evidence="1">
    <location>
        <begin position="77"/>
        <end position="175"/>
    </location>
</feature>
<feature type="binding site" evidence="1">
    <location>
        <position position="95"/>
    </location>
    <ligand>
        <name>Fe cation</name>
        <dbReference type="ChEBI" id="CHEBI:24875"/>
    </ligand>
</feature>
<feature type="binding site" evidence="1">
    <location>
        <position position="97"/>
    </location>
    <ligand>
        <name>Fe cation</name>
        <dbReference type="ChEBI" id="CHEBI:24875"/>
    </ligand>
</feature>
<feature type="binding site" evidence="1">
    <location>
        <position position="156"/>
    </location>
    <ligand>
        <name>Fe cation</name>
        <dbReference type="ChEBI" id="CHEBI:24875"/>
    </ligand>
</feature>
<feature type="binding site" evidence="1">
    <location>
        <position position="166"/>
    </location>
    <ligand>
        <name>2-oxoglutarate</name>
        <dbReference type="ChEBI" id="CHEBI:16810"/>
    </ligand>
</feature>
<accession>Q0C1R0</accession>
<protein>
    <recommendedName>
        <fullName evidence="1">PKHD-type hydroxylase HNE_1625</fullName>
        <ecNumber evidence="1">1.14.11.-</ecNumber>
    </recommendedName>
</protein>